<sequence>MAESDDEYDRKRRDKFRGERDSYRPERRDDRRPMGGGAGNARDEWAERNPFRGSAAAGGGGGGGGVGGGGGARHRPDYSDYRGSGPRPRYGSPGREMPPAKRMRPDWGDGEMRANPRFGYDPYLVQAWNDHYQSLHSAYSHSGHAPSAREPPPSGISNSDTQTQPAMLTLKQFLDTQDENISDSEVMRKYTEYKTDFKRQQLNEFFVAHKDEEWFKNKYHPEDSVRRSDEQRGFLKRRTDVFLELLNNGTISNVKVDSSQADALVRVLDTCVIKLEGGTDEDLKILDEKPKDPAPVYERRSERSERSEATESVVVTKREPESPKHQTKSEKDDDDLPEVESPQRKNVRPVNSDDEDWDDDEEMPAAKSEQQSELAAEKPAKQLNDEESMQANIDKNQKKSKKRKRTSSDDESSSSSSSESDSDSDDEKLIEKYDVEEGLRADQKAEAEKDKEEEEERAATAAAKAKQLPPDSPTPDEDVDAAAVEEQKNEVVAIKTEVNDEESQKTEQPAAEEEKSEQPKDDPEASSKNGEENEEEKAEKSEADTATTKAAAAAADDDAMTETIDVDKLKDSLKPRALHRTSSIFLRNLAPSITKAEIETICTRFSGYLRVAIADPLVERRWYRRGWITFTRDVNIKEICWSLNNQRLRDCEMGAIVNRDLSRRVRPANGITAHKQIVRSDIKLCAKIAMNLDERFKLWSEVDNADNAELNPEELKEATNGSGSYGFNSKNPVLQNITDYLIEEASAEEEELLGLAGDSKDGEGEPIERDEPLIQVLDRLVLYLRVVHSVDYYNHCEYPYEDEMPNRCGIIHARGPAPMRVTSNDVQEYIKSYEGKLQQFLAKTVQLSDENIKELGAKNPEKEVEKFVQANTQELAKDKWLCPLSGKKFKGPEFIRKHIFNKHEEKVDEVRKEVQYFNNYLRDPKRPQLPEHPGSSKRTESESGRGSGGYRPPMYPPFSAMPYGFAPPMMGGGGRGGRNFPQARREMPVEHQRRLIGYHDLDAPVNSDMFD</sequence>
<protein>
    <recommendedName>
        <fullName>Serrate RNA effector molecule homolog</fullName>
    </recommendedName>
    <alternativeName>
        <fullName>Arsenite-resistance protein 2 homolog</fullName>
    </alternativeName>
</protein>
<keyword id="KW-0539">Nucleus</keyword>
<keyword id="KW-0597">Phosphoprotein</keyword>
<keyword id="KW-1185">Reference proteome</keyword>
<keyword id="KW-0943">RNA-mediated gene silencing</keyword>
<organism>
    <name type="scientific">Drosophila grimshawi</name>
    <name type="common">Hawaiian fruit fly</name>
    <name type="synonym">Idiomyia grimshawi</name>
    <dbReference type="NCBI Taxonomy" id="7222"/>
    <lineage>
        <taxon>Eukaryota</taxon>
        <taxon>Metazoa</taxon>
        <taxon>Ecdysozoa</taxon>
        <taxon>Arthropoda</taxon>
        <taxon>Hexapoda</taxon>
        <taxon>Insecta</taxon>
        <taxon>Pterygota</taxon>
        <taxon>Neoptera</taxon>
        <taxon>Endopterygota</taxon>
        <taxon>Diptera</taxon>
        <taxon>Brachycera</taxon>
        <taxon>Muscomorpha</taxon>
        <taxon>Ephydroidea</taxon>
        <taxon>Drosophilidae</taxon>
        <taxon>Drosophila</taxon>
        <taxon>Hawaiian Drosophila</taxon>
    </lineage>
</organism>
<reference key="1">
    <citation type="journal article" date="2007" name="Nature">
        <title>Evolution of genes and genomes on the Drosophila phylogeny.</title>
        <authorList>
            <consortium name="Drosophila 12 genomes consortium"/>
        </authorList>
    </citation>
    <scope>NUCLEOTIDE SEQUENCE [LARGE SCALE GENOMIC DNA]</scope>
    <source>
        <strain>Tucson 15287-2541.00</strain>
    </source>
</reference>
<evidence type="ECO:0000250" key="1"/>
<evidence type="ECO:0000256" key="2">
    <source>
        <dbReference type="SAM" id="MobiDB-lite"/>
    </source>
</evidence>
<evidence type="ECO:0000305" key="3"/>
<comment type="function">
    <text evidence="1">Acts as a mediator between the cap-binding complex (CBC) and RNA-mediated gene silencing (RNAi). Involved in innate immunity via the short interfering RNAs (siRNAs) processing machinery by restricting the viral RNA production. Also involved microRNA (miRNA)-mediated silencing by contributing to the stability and delivery of primary miRNA transcripts to the primary miRNA processing complex containing drosha and pasha (By similarity).</text>
</comment>
<comment type="subunit">
    <text evidence="1">Interacts with cbp20, Dcr-2 and pasha.</text>
</comment>
<comment type="subcellular location">
    <subcellularLocation>
        <location evidence="1">Nucleus</location>
    </subcellularLocation>
</comment>
<comment type="similarity">
    <text evidence="3">Belongs to the ARS2 family.</text>
</comment>
<proteinExistence type="inferred from homology"/>
<feature type="chain" id="PRO_0000385218" description="Serrate RNA effector molecule homolog">
    <location>
        <begin position="1"/>
        <end position="1011"/>
    </location>
</feature>
<feature type="region of interest" description="Disordered" evidence="2">
    <location>
        <begin position="1"/>
        <end position="113"/>
    </location>
</feature>
<feature type="region of interest" description="Disordered" evidence="2">
    <location>
        <begin position="138"/>
        <end position="162"/>
    </location>
</feature>
<feature type="region of interest" description="Disordered" evidence="2">
    <location>
        <begin position="284"/>
        <end position="558"/>
    </location>
</feature>
<feature type="region of interest" description="Disordered" evidence="2">
    <location>
        <begin position="919"/>
        <end position="953"/>
    </location>
</feature>
<feature type="compositionally biased region" description="Basic and acidic residues" evidence="2">
    <location>
        <begin position="8"/>
        <end position="33"/>
    </location>
</feature>
<feature type="compositionally biased region" description="Basic and acidic residues" evidence="2">
    <location>
        <begin position="41"/>
        <end position="50"/>
    </location>
</feature>
<feature type="compositionally biased region" description="Gly residues" evidence="2">
    <location>
        <begin position="56"/>
        <end position="71"/>
    </location>
</feature>
<feature type="compositionally biased region" description="Low complexity" evidence="2">
    <location>
        <begin position="81"/>
        <end position="95"/>
    </location>
</feature>
<feature type="compositionally biased region" description="Basic and acidic residues" evidence="2">
    <location>
        <begin position="103"/>
        <end position="113"/>
    </location>
</feature>
<feature type="compositionally biased region" description="Basic and acidic residues" evidence="2">
    <location>
        <begin position="284"/>
        <end position="309"/>
    </location>
</feature>
<feature type="compositionally biased region" description="Basic and acidic residues" evidence="2">
    <location>
        <begin position="316"/>
        <end position="331"/>
    </location>
</feature>
<feature type="compositionally biased region" description="Acidic residues" evidence="2">
    <location>
        <begin position="352"/>
        <end position="363"/>
    </location>
</feature>
<feature type="compositionally biased region" description="Basic and acidic residues" evidence="2">
    <location>
        <begin position="375"/>
        <end position="384"/>
    </location>
</feature>
<feature type="compositionally biased region" description="Basic and acidic residues" evidence="2">
    <location>
        <begin position="427"/>
        <end position="450"/>
    </location>
</feature>
<feature type="compositionally biased region" description="Basic and acidic residues" evidence="2">
    <location>
        <begin position="512"/>
        <end position="543"/>
    </location>
</feature>
<feature type="compositionally biased region" description="Low complexity" evidence="2">
    <location>
        <begin position="544"/>
        <end position="554"/>
    </location>
</feature>
<feature type="modified residue" description="Phosphotyrosine" evidence="1">
    <location>
        <position position="90"/>
    </location>
</feature>
<feature type="modified residue" description="Phosphoserine" evidence="1">
    <location>
        <position position="92"/>
    </location>
</feature>
<feature type="modified residue" description="Phosphoserine" evidence="1">
    <location>
        <position position="322"/>
    </location>
</feature>
<feature type="modified residue" description="Phosphoserine" evidence="1">
    <location>
        <position position="352"/>
    </location>
</feature>
<feature type="modified residue" description="Phosphoserine" evidence="1">
    <location>
        <position position="472"/>
    </location>
</feature>
<dbReference type="EMBL" id="CH916367">
    <property type="protein sequence ID" value="EDW00577.1"/>
    <property type="molecule type" value="Genomic_DNA"/>
</dbReference>
<dbReference type="SMR" id="B4J497"/>
<dbReference type="FunCoup" id="B4J497">
    <property type="interactions" value="2426"/>
</dbReference>
<dbReference type="STRING" id="7222.B4J497"/>
<dbReference type="EnsemblMetazoa" id="FBtr0156363">
    <property type="protein sequence ID" value="FBpp0154855"/>
    <property type="gene ID" value="FBgn0128411"/>
</dbReference>
<dbReference type="EnsemblMetazoa" id="XM_001985674.3">
    <property type="protein sequence ID" value="XP_001985710.1"/>
    <property type="gene ID" value="LOC6560148"/>
</dbReference>
<dbReference type="GeneID" id="6560148"/>
<dbReference type="KEGG" id="dgr:6560148"/>
<dbReference type="CTD" id="35539"/>
<dbReference type="eggNOG" id="KOG2295">
    <property type="taxonomic scope" value="Eukaryota"/>
</dbReference>
<dbReference type="HOGENOM" id="CLU_008560_0_0_1"/>
<dbReference type="InParanoid" id="B4J497"/>
<dbReference type="OMA" id="GARDEWS"/>
<dbReference type="OrthoDB" id="342064at2759"/>
<dbReference type="PhylomeDB" id="B4J497"/>
<dbReference type="Proteomes" id="UP000001070">
    <property type="component" value="Unassembled WGS sequence"/>
</dbReference>
<dbReference type="GO" id="GO:0016604">
    <property type="term" value="C:nuclear body"/>
    <property type="evidence" value="ECO:0007669"/>
    <property type="project" value="TreeGrafter"/>
</dbReference>
<dbReference type="GO" id="GO:0005654">
    <property type="term" value="C:nucleoplasm"/>
    <property type="evidence" value="ECO:0000250"/>
    <property type="project" value="UniProtKB"/>
</dbReference>
<dbReference type="GO" id="GO:0031053">
    <property type="term" value="P:primary miRNA processing"/>
    <property type="evidence" value="ECO:0000250"/>
    <property type="project" value="UniProtKB"/>
</dbReference>
<dbReference type="GO" id="GO:0035194">
    <property type="term" value="P:regulatory ncRNA-mediated post-transcriptional gene silencing"/>
    <property type="evidence" value="ECO:0000250"/>
    <property type="project" value="UniProtKB"/>
</dbReference>
<dbReference type="InterPro" id="IPR039727">
    <property type="entry name" value="SE/Ars2"/>
</dbReference>
<dbReference type="InterPro" id="IPR007042">
    <property type="entry name" value="SERRATE/Ars2_C"/>
</dbReference>
<dbReference type="InterPro" id="IPR021933">
    <property type="entry name" value="SERRATE/Ars2_N"/>
</dbReference>
<dbReference type="PANTHER" id="PTHR13165">
    <property type="entry name" value="ARSENITE-RESISTANCE PROTEIN 2"/>
    <property type="match status" value="1"/>
</dbReference>
<dbReference type="PANTHER" id="PTHR13165:SF0">
    <property type="entry name" value="SERRATE RNA EFFECTOR MOLECULE HOMOLOG"/>
    <property type="match status" value="1"/>
</dbReference>
<dbReference type="Pfam" id="PF04959">
    <property type="entry name" value="ARS2"/>
    <property type="match status" value="1"/>
</dbReference>
<dbReference type="Pfam" id="PF12066">
    <property type="entry name" value="SERRATE_Ars2_N"/>
    <property type="match status" value="1"/>
</dbReference>
<accession>B4J497</accession>
<name>SRRT_DROGR</name>
<gene>
    <name type="primary">Ars2</name>
    <name type="ORF">GH20949</name>
</gene>